<accession>Q7XBW5</accession>
<accession>A0A0P0XXK0</accession>
<accession>Q0IVE6</accession>
<accession>Q8W3I2</accession>
<comment type="subcellular location">
    <subcellularLocation>
        <location evidence="3">Plastid</location>
        <location evidence="3">Chloroplast</location>
    </subcellularLocation>
</comment>
<comment type="similarity">
    <text evidence="3">Belongs to the PAP/fibrillin family.</text>
</comment>
<comment type="sequence caution" evidence="3">
    <conflict type="erroneous gene model prediction">
        <sequence resource="EMBL-CDS" id="BAF27319"/>
    </conflict>
</comment>
<name>PAP3_ORYSJ</name>
<protein>
    <recommendedName>
        <fullName>Probable plastid-lipid-associated protein 3, chloroplastic</fullName>
    </recommendedName>
</protein>
<feature type="transit peptide" description="Chloroplast" evidence="1">
    <location>
        <begin position="1"/>
        <end position="46"/>
    </location>
</feature>
<feature type="chain" id="PRO_0000023212" description="Probable plastid-lipid-associated protein 3, chloroplastic">
    <location>
        <begin position="47"/>
        <end position="374"/>
    </location>
</feature>
<feature type="region of interest" description="Disordered" evidence="2">
    <location>
        <begin position="19"/>
        <end position="148"/>
    </location>
</feature>
<feature type="compositionally biased region" description="Low complexity" evidence="2">
    <location>
        <begin position="28"/>
        <end position="54"/>
    </location>
</feature>
<feature type="compositionally biased region" description="Pro residues" evidence="2">
    <location>
        <begin position="64"/>
        <end position="73"/>
    </location>
</feature>
<feature type="compositionally biased region" description="Pro residues" evidence="2">
    <location>
        <begin position="127"/>
        <end position="136"/>
    </location>
</feature>
<dbReference type="EMBL" id="AC018929">
    <property type="protein sequence ID" value="AAL67595.1"/>
    <property type="molecule type" value="Genomic_DNA"/>
</dbReference>
<dbReference type="EMBL" id="DP000086">
    <property type="protein sequence ID" value="AAP55143.1"/>
    <property type="molecule type" value="Genomic_DNA"/>
</dbReference>
<dbReference type="EMBL" id="AP008216">
    <property type="protein sequence ID" value="BAF27319.2"/>
    <property type="status" value="ALT_SEQ"/>
    <property type="molecule type" value="Genomic_DNA"/>
</dbReference>
<dbReference type="EMBL" id="AP014966">
    <property type="protein sequence ID" value="BAT12198.1"/>
    <property type="molecule type" value="Genomic_DNA"/>
</dbReference>
<dbReference type="RefSeq" id="XP_015614073.1">
    <property type="nucleotide sequence ID" value="XM_015758587.1"/>
</dbReference>
<dbReference type="FunCoup" id="Q7XBW5">
    <property type="interactions" value="1367"/>
</dbReference>
<dbReference type="STRING" id="39947.Q7XBW5"/>
<dbReference type="PaxDb" id="39947-Q7XBW5"/>
<dbReference type="EnsemblPlants" id="Os10t0575700-00">
    <property type="protein sequence ID" value="Os10t0575700-00"/>
    <property type="gene ID" value="Os10g0575700"/>
</dbReference>
<dbReference type="Gramene" id="Os10t0575700-00">
    <property type="protein sequence ID" value="Os10t0575700-00"/>
    <property type="gene ID" value="Os10g0575700"/>
</dbReference>
<dbReference type="KEGG" id="dosa:Os10g0575700"/>
<dbReference type="eggNOG" id="ENOG502QQMX">
    <property type="taxonomic scope" value="Eukaryota"/>
</dbReference>
<dbReference type="HOGENOM" id="CLU_045041_0_2_1"/>
<dbReference type="InParanoid" id="Q7XBW5"/>
<dbReference type="OMA" id="PDEWGDR"/>
<dbReference type="OrthoDB" id="498392at2759"/>
<dbReference type="Proteomes" id="UP000000763">
    <property type="component" value="Chromosome 10"/>
</dbReference>
<dbReference type="Proteomes" id="UP000059680">
    <property type="component" value="Chromosome 10"/>
</dbReference>
<dbReference type="GO" id="GO:0009507">
    <property type="term" value="C:chloroplast"/>
    <property type="evidence" value="ECO:0007669"/>
    <property type="project" value="UniProtKB-SubCell"/>
</dbReference>
<dbReference type="InterPro" id="IPR039633">
    <property type="entry name" value="PAP"/>
</dbReference>
<dbReference type="InterPro" id="IPR006843">
    <property type="entry name" value="PAP/fibrillin_dom"/>
</dbReference>
<dbReference type="PANTHER" id="PTHR31906">
    <property type="entry name" value="PLASTID-LIPID-ASSOCIATED PROTEIN 4, CHLOROPLASTIC-RELATED"/>
    <property type="match status" value="1"/>
</dbReference>
<dbReference type="Pfam" id="PF04755">
    <property type="entry name" value="PAP_fibrillin"/>
    <property type="match status" value="1"/>
</dbReference>
<gene>
    <name type="primary">PAP3</name>
    <name type="ordered locus">Os10g0575700</name>
    <name type="ordered locus">LOC_Os10g42500</name>
    <name type="ORF">OSJNBa0027L23.3</name>
</gene>
<keyword id="KW-0150">Chloroplast</keyword>
<keyword id="KW-0934">Plastid</keyword>
<keyword id="KW-1185">Reference proteome</keyword>
<keyword id="KW-0809">Transit peptide</keyword>
<evidence type="ECO:0000255" key="1"/>
<evidence type="ECO:0000256" key="2">
    <source>
        <dbReference type="SAM" id="MobiDB-lite"/>
    </source>
</evidence>
<evidence type="ECO:0000305" key="3"/>
<reference key="1">
    <citation type="journal article" date="2003" name="Science">
        <title>In-depth view of structure, activity, and evolution of rice chromosome 10.</title>
        <authorList>
            <person name="Yu Y."/>
            <person name="Rambo T."/>
            <person name="Currie J."/>
            <person name="Saski C."/>
            <person name="Kim H.-R."/>
            <person name="Collura K."/>
            <person name="Thompson S."/>
            <person name="Simmons J."/>
            <person name="Yang T.-J."/>
            <person name="Nah G."/>
            <person name="Patel A.J."/>
            <person name="Thurmond S."/>
            <person name="Henry D."/>
            <person name="Oates R."/>
            <person name="Palmer M."/>
            <person name="Pries G."/>
            <person name="Gibson J."/>
            <person name="Anderson H."/>
            <person name="Paradkar M."/>
            <person name="Crane L."/>
            <person name="Dale J."/>
            <person name="Carver M.B."/>
            <person name="Wood T."/>
            <person name="Frisch D."/>
            <person name="Engler F."/>
            <person name="Soderlund C."/>
            <person name="Palmer L.E."/>
            <person name="Teytelman L."/>
            <person name="Nascimento L."/>
            <person name="De la Bastide M."/>
            <person name="Spiegel L."/>
            <person name="Ware D."/>
            <person name="O'Shaughnessy A."/>
            <person name="Dike S."/>
            <person name="Dedhia N."/>
            <person name="Preston R."/>
            <person name="Huang E."/>
            <person name="Ferraro K."/>
            <person name="Kuit K."/>
            <person name="Miller B."/>
            <person name="Zutavern T."/>
            <person name="Katzenberger F."/>
            <person name="Muller S."/>
            <person name="Balija V."/>
            <person name="Martienssen R.A."/>
            <person name="Stein L."/>
            <person name="Minx P."/>
            <person name="Johnson D."/>
            <person name="Cordum H."/>
            <person name="Mardis E."/>
            <person name="Cheng Z."/>
            <person name="Jiang J."/>
            <person name="Wilson R."/>
            <person name="McCombie W.R."/>
            <person name="Wing R.A."/>
            <person name="Yuan Q."/>
            <person name="Ouyang S."/>
            <person name="Liu J."/>
            <person name="Jones K.M."/>
            <person name="Gansberger K."/>
            <person name="Moffat K."/>
            <person name="Hill J."/>
            <person name="Tsitrin T."/>
            <person name="Overton L."/>
            <person name="Bera J."/>
            <person name="Kim M."/>
            <person name="Jin S."/>
            <person name="Tallon L."/>
            <person name="Ciecko A."/>
            <person name="Pai G."/>
            <person name="Van Aken S."/>
            <person name="Utterback T."/>
            <person name="Reidmuller S."/>
            <person name="Bormann J."/>
            <person name="Feldblyum T."/>
            <person name="Hsiao J."/>
            <person name="Zismann V."/>
            <person name="Blunt S."/>
            <person name="de Vazeille A.R."/>
            <person name="Shaffer T."/>
            <person name="Koo H."/>
            <person name="Suh B."/>
            <person name="Yang Q."/>
            <person name="Haas B."/>
            <person name="Peterson J."/>
            <person name="Pertea M."/>
            <person name="Volfovsky N."/>
            <person name="Wortman J."/>
            <person name="White O."/>
            <person name="Salzberg S.L."/>
            <person name="Fraser C.M."/>
            <person name="Buell C.R."/>
            <person name="Messing J."/>
            <person name="Song R."/>
            <person name="Fuks G."/>
            <person name="Llaca V."/>
            <person name="Kovchak S."/>
            <person name="Young S."/>
            <person name="Bowers J.E."/>
            <person name="Paterson A.H."/>
            <person name="Johns M.A."/>
            <person name="Mao L."/>
            <person name="Pan H."/>
            <person name="Dean R.A."/>
        </authorList>
    </citation>
    <scope>NUCLEOTIDE SEQUENCE [LARGE SCALE GENOMIC DNA]</scope>
    <source>
        <strain>cv. Nipponbare</strain>
    </source>
</reference>
<reference key="2">
    <citation type="journal article" date="2005" name="Nature">
        <title>The map-based sequence of the rice genome.</title>
        <authorList>
            <consortium name="International rice genome sequencing project (IRGSP)"/>
        </authorList>
    </citation>
    <scope>NUCLEOTIDE SEQUENCE [LARGE SCALE GENOMIC DNA]</scope>
    <source>
        <strain>cv. Nipponbare</strain>
    </source>
</reference>
<reference key="3">
    <citation type="journal article" date="2008" name="Nucleic Acids Res.">
        <title>The rice annotation project database (RAP-DB): 2008 update.</title>
        <authorList>
            <consortium name="The rice annotation project (RAP)"/>
        </authorList>
    </citation>
    <scope>GENOME REANNOTATION</scope>
    <source>
        <strain>cv. Nipponbare</strain>
    </source>
</reference>
<reference key="4">
    <citation type="journal article" date="2013" name="Rice">
        <title>Improvement of the Oryza sativa Nipponbare reference genome using next generation sequence and optical map data.</title>
        <authorList>
            <person name="Kawahara Y."/>
            <person name="de la Bastide M."/>
            <person name="Hamilton J.P."/>
            <person name="Kanamori H."/>
            <person name="McCombie W.R."/>
            <person name="Ouyang S."/>
            <person name="Schwartz D.C."/>
            <person name="Tanaka T."/>
            <person name="Wu J."/>
            <person name="Zhou S."/>
            <person name="Childs K.L."/>
            <person name="Davidson R.M."/>
            <person name="Lin H."/>
            <person name="Quesada-Ocampo L."/>
            <person name="Vaillancourt B."/>
            <person name="Sakai H."/>
            <person name="Lee S.S."/>
            <person name="Kim J."/>
            <person name="Numa H."/>
            <person name="Itoh T."/>
            <person name="Buell C.R."/>
            <person name="Matsumoto T."/>
        </authorList>
    </citation>
    <scope>GENOME REANNOTATION</scope>
    <source>
        <strain>cv. Nipponbare</strain>
    </source>
</reference>
<proteinExistence type="inferred from homology"/>
<sequence length="374" mass="40041">MAMPPPLFAAASHASLLLPSPTIHSSTGSRRPFRLPLRSSRRPPVAAAAASGVPDEWGDRSPSAPEPPSQPDPPIDDDEWGRDDPSASGNSRPVLVTDEWGEPGVPEPQSTSAADPPTNDDEWGGDPAPPPPPPPVPEEDNEEERREELKRCLVDTVYGSDLGFRASSEVRGEVLELVTQLEATNPTPEPVQATHLLAGNWILIYTAYSELLPILAVGAAPLFKVDEISQEIDTNSMTIVNASTISSPFASFSFSATASFDVQSPSRIEVQFKEGSFQPPKISSSVDLPAEVDIFGQKISLGPVQQVLNPLQQAFASIAGSISGQPPLKLPIPGNNRARSWLLTTYLDKDLRISRGDGGLFILVKEGSPLLDQL</sequence>
<organism>
    <name type="scientific">Oryza sativa subsp. japonica</name>
    <name type="common">Rice</name>
    <dbReference type="NCBI Taxonomy" id="39947"/>
    <lineage>
        <taxon>Eukaryota</taxon>
        <taxon>Viridiplantae</taxon>
        <taxon>Streptophyta</taxon>
        <taxon>Embryophyta</taxon>
        <taxon>Tracheophyta</taxon>
        <taxon>Spermatophyta</taxon>
        <taxon>Magnoliopsida</taxon>
        <taxon>Liliopsida</taxon>
        <taxon>Poales</taxon>
        <taxon>Poaceae</taxon>
        <taxon>BOP clade</taxon>
        <taxon>Oryzoideae</taxon>
        <taxon>Oryzeae</taxon>
        <taxon>Oryzinae</taxon>
        <taxon>Oryza</taxon>
        <taxon>Oryza sativa</taxon>
    </lineage>
</organism>